<sequence>MIGNWNYGTGRRKSAVARVFIKAGKGDIVVNGKPIADYFSRETSLMIVRQPLELTNHGTTFDIKVNVSGGGETGQAGAVRHGITRALMDYDATLKPALSNAGFVTRDAREVERKKVGFHKARRRKQFSKR</sequence>
<gene>
    <name evidence="1" type="primary">rpsI</name>
    <name type="ordered locus">Bphy_2563</name>
</gene>
<protein>
    <recommendedName>
        <fullName evidence="1">Small ribosomal subunit protein uS9</fullName>
    </recommendedName>
    <alternativeName>
        <fullName evidence="2">30S ribosomal protein S9</fullName>
    </alternativeName>
</protein>
<feature type="chain" id="PRO_1000128095" description="Small ribosomal subunit protein uS9">
    <location>
        <begin position="1"/>
        <end position="130"/>
    </location>
</feature>
<name>RS9_PARP8</name>
<comment type="similarity">
    <text evidence="1">Belongs to the universal ribosomal protein uS9 family.</text>
</comment>
<organism>
    <name type="scientific">Paraburkholderia phymatum (strain DSM 17167 / CIP 108236 / LMG 21445 / STM815)</name>
    <name type="common">Burkholderia phymatum</name>
    <dbReference type="NCBI Taxonomy" id="391038"/>
    <lineage>
        <taxon>Bacteria</taxon>
        <taxon>Pseudomonadati</taxon>
        <taxon>Pseudomonadota</taxon>
        <taxon>Betaproteobacteria</taxon>
        <taxon>Burkholderiales</taxon>
        <taxon>Burkholderiaceae</taxon>
        <taxon>Paraburkholderia</taxon>
    </lineage>
</organism>
<keyword id="KW-1185">Reference proteome</keyword>
<keyword id="KW-0687">Ribonucleoprotein</keyword>
<keyword id="KW-0689">Ribosomal protein</keyword>
<evidence type="ECO:0000255" key="1">
    <source>
        <dbReference type="HAMAP-Rule" id="MF_00532"/>
    </source>
</evidence>
<evidence type="ECO:0000305" key="2"/>
<proteinExistence type="inferred from homology"/>
<reference key="1">
    <citation type="journal article" date="2014" name="Stand. Genomic Sci.">
        <title>Complete genome sequence of Burkholderia phymatum STM815(T), a broad host range and efficient nitrogen-fixing symbiont of Mimosa species.</title>
        <authorList>
            <person name="Moulin L."/>
            <person name="Klonowska A."/>
            <person name="Caroline B."/>
            <person name="Booth K."/>
            <person name="Vriezen J.A."/>
            <person name="Melkonian R."/>
            <person name="James E.K."/>
            <person name="Young J.P."/>
            <person name="Bena G."/>
            <person name="Hauser L."/>
            <person name="Land M."/>
            <person name="Kyrpides N."/>
            <person name="Bruce D."/>
            <person name="Chain P."/>
            <person name="Copeland A."/>
            <person name="Pitluck S."/>
            <person name="Woyke T."/>
            <person name="Lizotte-Waniewski M."/>
            <person name="Bristow J."/>
            <person name="Riley M."/>
        </authorList>
    </citation>
    <scope>NUCLEOTIDE SEQUENCE [LARGE SCALE GENOMIC DNA]</scope>
    <source>
        <strain>DSM 17167 / CIP 108236 / LMG 21445 / STM815</strain>
    </source>
</reference>
<accession>B2JGV1</accession>
<dbReference type="EMBL" id="CP001043">
    <property type="protein sequence ID" value="ACC71735.1"/>
    <property type="molecule type" value="Genomic_DNA"/>
</dbReference>
<dbReference type="RefSeq" id="WP_012401937.1">
    <property type="nucleotide sequence ID" value="NC_010622.1"/>
</dbReference>
<dbReference type="SMR" id="B2JGV1"/>
<dbReference type="STRING" id="391038.Bphy_2563"/>
<dbReference type="KEGG" id="bph:Bphy_2563"/>
<dbReference type="eggNOG" id="COG0103">
    <property type="taxonomic scope" value="Bacteria"/>
</dbReference>
<dbReference type="HOGENOM" id="CLU_046483_2_1_4"/>
<dbReference type="OrthoDB" id="9803965at2"/>
<dbReference type="Proteomes" id="UP000001192">
    <property type="component" value="Chromosome 1"/>
</dbReference>
<dbReference type="GO" id="GO:0022627">
    <property type="term" value="C:cytosolic small ribosomal subunit"/>
    <property type="evidence" value="ECO:0007669"/>
    <property type="project" value="TreeGrafter"/>
</dbReference>
<dbReference type="GO" id="GO:0003723">
    <property type="term" value="F:RNA binding"/>
    <property type="evidence" value="ECO:0007669"/>
    <property type="project" value="TreeGrafter"/>
</dbReference>
<dbReference type="GO" id="GO:0003735">
    <property type="term" value="F:structural constituent of ribosome"/>
    <property type="evidence" value="ECO:0007669"/>
    <property type="project" value="InterPro"/>
</dbReference>
<dbReference type="GO" id="GO:0006412">
    <property type="term" value="P:translation"/>
    <property type="evidence" value="ECO:0007669"/>
    <property type="project" value="UniProtKB-UniRule"/>
</dbReference>
<dbReference type="FunFam" id="3.30.230.10:FF:000001">
    <property type="entry name" value="30S ribosomal protein S9"/>
    <property type="match status" value="1"/>
</dbReference>
<dbReference type="Gene3D" id="3.30.230.10">
    <property type="match status" value="1"/>
</dbReference>
<dbReference type="HAMAP" id="MF_00532_B">
    <property type="entry name" value="Ribosomal_uS9_B"/>
    <property type="match status" value="1"/>
</dbReference>
<dbReference type="InterPro" id="IPR020568">
    <property type="entry name" value="Ribosomal_Su5_D2-typ_SF"/>
</dbReference>
<dbReference type="InterPro" id="IPR000754">
    <property type="entry name" value="Ribosomal_uS9"/>
</dbReference>
<dbReference type="InterPro" id="IPR023035">
    <property type="entry name" value="Ribosomal_uS9_bac/plastid"/>
</dbReference>
<dbReference type="InterPro" id="IPR020574">
    <property type="entry name" value="Ribosomal_uS9_CS"/>
</dbReference>
<dbReference type="InterPro" id="IPR014721">
    <property type="entry name" value="Ribsml_uS5_D2-typ_fold_subgr"/>
</dbReference>
<dbReference type="NCBIfam" id="NF001099">
    <property type="entry name" value="PRK00132.1"/>
    <property type="match status" value="1"/>
</dbReference>
<dbReference type="PANTHER" id="PTHR21569">
    <property type="entry name" value="RIBOSOMAL PROTEIN S9"/>
    <property type="match status" value="1"/>
</dbReference>
<dbReference type="PANTHER" id="PTHR21569:SF1">
    <property type="entry name" value="SMALL RIBOSOMAL SUBUNIT PROTEIN US9M"/>
    <property type="match status" value="1"/>
</dbReference>
<dbReference type="Pfam" id="PF00380">
    <property type="entry name" value="Ribosomal_S9"/>
    <property type="match status" value="1"/>
</dbReference>
<dbReference type="SUPFAM" id="SSF54211">
    <property type="entry name" value="Ribosomal protein S5 domain 2-like"/>
    <property type="match status" value="1"/>
</dbReference>
<dbReference type="PROSITE" id="PS00360">
    <property type="entry name" value="RIBOSOMAL_S9"/>
    <property type="match status" value="1"/>
</dbReference>